<dbReference type="EMBL" id="X75297">
    <property type="protein sequence ID" value="CAA53045.1"/>
    <property type="molecule type" value="Genomic_DNA"/>
</dbReference>
<dbReference type="EMBL" id="AL123456">
    <property type="protein sequence ID" value="CCP43678.1"/>
    <property type="molecule type" value="Genomic_DNA"/>
</dbReference>
<dbReference type="PIR" id="B70584">
    <property type="entry name" value="B70584"/>
</dbReference>
<dbReference type="RefSeq" id="NP_215445.2">
    <property type="nucleotide sequence ID" value="NC_000962.3"/>
</dbReference>
<dbReference type="RefSeq" id="WP_010886095.1">
    <property type="nucleotide sequence ID" value="NC_000962.3"/>
</dbReference>
<dbReference type="SMR" id="P9WG11"/>
<dbReference type="FunCoup" id="P9WG11">
    <property type="interactions" value="87"/>
</dbReference>
<dbReference type="STRING" id="83332.Rv0930"/>
<dbReference type="PaxDb" id="83332-Rv0930"/>
<dbReference type="DNASU" id="885589"/>
<dbReference type="GeneID" id="885589"/>
<dbReference type="KEGG" id="mtu:Rv0930"/>
<dbReference type="PATRIC" id="fig|83332.12.peg.1038"/>
<dbReference type="TubercuList" id="Rv0930"/>
<dbReference type="eggNOG" id="COG0581">
    <property type="taxonomic scope" value="Bacteria"/>
</dbReference>
<dbReference type="InParanoid" id="P9WG11"/>
<dbReference type="OrthoDB" id="9775069at2"/>
<dbReference type="PhylomeDB" id="P9WG11"/>
<dbReference type="PHI-base" id="PHI:3635"/>
<dbReference type="Proteomes" id="UP000001584">
    <property type="component" value="Chromosome"/>
</dbReference>
<dbReference type="GO" id="GO:0005886">
    <property type="term" value="C:plasma membrane"/>
    <property type="evidence" value="ECO:0007669"/>
    <property type="project" value="UniProtKB-SubCell"/>
</dbReference>
<dbReference type="GO" id="GO:0005315">
    <property type="term" value="F:phosphate transmembrane transporter activity"/>
    <property type="evidence" value="ECO:0007669"/>
    <property type="project" value="InterPro"/>
</dbReference>
<dbReference type="GO" id="GO:0051701">
    <property type="term" value="P:biological process involved in interaction with host"/>
    <property type="evidence" value="ECO:0000315"/>
    <property type="project" value="MTBBASE"/>
</dbReference>
<dbReference type="GO" id="GO:0035435">
    <property type="term" value="P:phosphate ion transmembrane transport"/>
    <property type="evidence" value="ECO:0007669"/>
    <property type="project" value="InterPro"/>
</dbReference>
<dbReference type="CDD" id="cd06261">
    <property type="entry name" value="TM_PBP2"/>
    <property type="match status" value="1"/>
</dbReference>
<dbReference type="Gene3D" id="1.10.3720.10">
    <property type="entry name" value="MetI-like"/>
    <property type="match status" value="1"/>
</dbReference>
<dbReference type="InterPro" id="IPR000515">
    <property type="entry name" value="MetI-like"/>
</dbReference>
<dbReference type="InterPro" id="IPR035906">
    <property type="entry name" value="MetI-like_sf"/>
</dbReference>
<dbReference type="InterPro" id="IPR005672">
    <property type="entry name" value="Phosphate_PstA"/>
</dbReference>
<dbReference type="InterPro" id="IPR051408">
    <property type="entry name" value="Phosphate_transprt_permease"/>
</dbReference>
<dbReference type="NCBIfam" id="TIGR00974">
    <property type="entry name" value="3a0107s02c"/>
    <property type="match status" value="1"/>
</dbReference>
<dbReference type="PANTHER" id="PTHR42922">
    <property type="entry name" value="PHOSPHATE TRANSPORT SYSTEM PERMEASE PROTEIN PSTA"/>
    <property type="match status" value="1"/>
</dbReference>
<dbReference type="PANTHER" id="PTHR42922:SF1">
    <property type="entry name" value="PHOSPHATE TRANSPORT SYSTEM PERMEASE PROTEIN PSTA"/>
    <property type="match status" value="1"/>
</dbReference>
<dbReference type="Pfam" id="PF00528">
    <property type="entry name" value="BPD_transp_1"/>
    <property type="match status" value="1"/>
</dbReference>
<dbReference type="SUPFAM" id="SSF161098">
    <property type="entry name" value="MetI-like"/>
    <property type="match status" value="1"/>
</dbReference>
<dbReference type="PROSITE" id="PS50928">
    <property type="entry name" value="ABC_TM1"/>
    <property type="match status" value="1"/>
</dbReference>
<keyword id="KW-1003">Cell membrane</keyword>
<keyword id="KW-0472">Membrane</keyword>
<keyword id="KW-0592">Phosphate transport</keyword>
<keyword id="KW-1185">Reference proteome</keyword>
<keyword id="KW-0812">Transmembrane</keyword>
<keyword id="KW-1133">Transmembrane helix</keyword>
<keyword id="KW-0813">Transport</keyword>
<sequence>MSPSMSIEALDQPVKPVVFRPLTLRRRIKNSVATTFFFTSFVVALIPLVWLLWVVIARGWFAVTRSGWWTHSLRGVLPEQFAGGVYHALYGTLVQAGVAAVLAVPLGLMTAVYLVEYGTGRMSRVTTFTVDVLAGVPSIVAALFVFSLWIATLGFQQSAFAVALALVLLMLPVVVRAGEEMLRLVPDELREASYALGVPKWKTIVRIVAPIAMPGIVSGILLSIARVVGETAPVLVLVGYSHSINLDVFHGNMASLPLLIYTELTNPEHAGFLRVWGAALTLIIVVATINLAAAMIRFVATRRRRLPL</sequence>
<evidence type="ECO:0000255" key="1">
    <source>
        <dbReference type="PROSITE-ProRule" id="PRU00441"/>
    </source>
</evidence>
<evidence type="ECO:0000269" key="2">
    <source>
    </source>
</evidence>
<evidence type="ECO:0000305" key="3"/>
<evidence type="ECO:0000305" key="4">
    <source>
    </source>
</evidence>
<gene>
    <name type="primary">pstA1</name>
    <name type="ordered locus">Rv0930</name>
    <name type="ORF">MTCY21C12.24</name>
</gene>
<feature type="chain" id="PRO_0000060201" description="Phosphate transport system permease protein PstA 1">
    <location>
        <begin position="1"/>
        <end position="308"/>
    </location>
</feature>
<feature type="transmembrane region" description="Helical" evidence="1">
    <location>
        <begin position="36"/>
        <end position="56"/>
    </location>
</feature>
<feature type="transmembrane region" description="Helical" evidence="1">
    <location>
        <begin position="96"/>
        <end position="116"/>
    </location>
</feature>
<feature type="transmembrane region" description="Helical" evidence="1">
    <location>
        <begin position="132"/>
        <end position="152"/>
    </location>
</feature>
<feature type="transmembrane region" description="Helical" evidence="1">
    <location>
        <begin position="155"/>
        <end position="175"/>
    </location>
</feature>
<feature type="transmembrane region" description="Helical" evidence="1">
    <location>
        <begin position="204"/>
        <end position="224"/>
    </location>
</feature>
<feature type="transmembrane region" description="Helical" evidence="1">
    <location>
        <begin position="276"/>
        <end position="296"/>
    </location>
</feature>
<feature type="domain" description="ABC transmembrane type-1" evidence="1">
    <location>
        <begin position="89"/>
        <end position="297"/>
    </location>
</feature>
<feature type="sequence conflict" description="In Ref. 1; CAA53045." evidence="3" ref="1">
    <original>M</original>
    <variation>T</variation>
    <location>
        <position position="5"/>
    </location>
</feature>
<feature type="sequence conflict" description="In Ref. 1; CAA53045." evidence="3" ref="1">
    <original>V</original>
    <variation>A</variation>
    <location>
        <position position="208"/>
    </location>
</feature>
<feature type="sequence conflict" description="In Ref. 1; CAA53045." evidence="3" ref="1">
    <location>
        <begin position="305"/>
        <end position="308"/>
    </location>
</feature>
<organism>
    <name type="scientific">Mycobacterium tuberculosis (strain ATCC 25618 / H37Rv)</name>
    <dbReference type="NCBI Taxonomy" id="83332"/>
    <lineage>
        <taxon>Bacteria</taxon>
        <taxon>Bacillati</taxon>
        <taxon>Actinomycetota</taxon>
        <taxon>Actinomycetes</taxon>
        <taxon>Mycobacteriales</taxon>
        <taxon>Mycobacteriaceae</taxon>
        <taxon>Mycobacterium</taxon>
        <taxon>Mycobacterium tuberculosis complex</taxon>
    </lineage>
</organism>
<accession>P9WG11</accession>
<accession>L0T7X9</accession>
<accession>O86345</accession>
<accession>Q50795</accession>
<comment type="function">
    <text evidence="4">Part of the binding-protein-dependent transport system for phosphate; probably responsible for the translocation of the substrate across the membrane.</text>
</comment>
<comment type="subunit">
    <text evidence="3">The complex is composed of two ATP-binding proteins (PstB), two transmembrane proteins (PstC and PstA) and a solute-binding protein (PstS).</text>
</comment>
<comment type="subcellular location">
    <subcellularLocation>
        <location evidence="3">Cell membrane</location>
        <topology evidence="3">Multi-pass membrane protein</topology>
    </subcellularLocation>
</comment>
<comment type="induction">
    <text evidence="2">4-fold by phosphate starvation, part of the pstS3-pstC2-pstA1 operon.</text>
</comment>
<comment type="similarity">
    <text evidence="3">Belongs to the binding-protein-dependent transport system permease family. CysTW subfamily.</text>
</comment>
<protein>
    <recommendedName>
        <fullName>Phosphate transport system permease protein PstA 1</fullName>
    </recommendedName>
</protein>
<name>PSTA1_MYCTU</name>
<proteinExistence type="evidence at transcript level"/>
<reference key="1">
    <citation type="journal article" date="1994" name="Infect. Immun.">
        <title>Structure of the Mycobacterium tuberculosis antigen 88, a protein related to the Escherichia coli PstA periplasmic phosphate permease subunit.</title>
        <authorList>
            <person name="Braibant M."/>
            <person name="De Wit L."/>
            <person name="Peirs P."/>
            <person name="Kalai M."/>
            <person name="Ooms J."/>
            <person name="Drowart A."/>
            <person name="Huygen K."/>
            <person name="Content J."/>
        </authorList>
    </citation>
    <scope>NUCLEOTIDE SEQUENCE [GENOMIC DNA]</scope>
    <source>
        <strain>ATCC 35801 / TMC 107 / Erdman</strain>
    </source>
</reference>
<reference key="2">
    <citation type="journal article" date="1996" name="FEBS Lett.">
        <title>Identification of a second Mycobacterium tuberculosis gene cluster encoding proteins of an ABC phosphate transporter.</title>
        <authorList>
            <person name="Braibant M."/>
            <person name="Lefevre P."/>
            <person name="de Wit L."/>
            <person name="Ooms J."/>
            <person name="Peirs P."/>
            <person name="Huygen K."/>
            <person name="Wattiez R."/>
            <person name="Content J."/>
        </authorList>
    </citation>
    <scope>SEQUENCE REVISION</scope>
</reference>
<reference key="3">
    <citation type="journal article" date="1998" name="Nature">
        <title>Deciphering the biology of Mycobacterium tuberculosis from the complete genome sequence.</title>
        <authorList>
            <person name="Cole S.T."/>
            <person name="Brosch R."/>
            <person name="Parkhill J."/>
            <person name="Garnier T."/>
            <person name="Churcher C.M."/>
            <person name="Harris D.E."/>
            <person name="Gordon S.V."/>
            <person name="Eiglmeier K."/>
            <person name="Gas S."/>
            <person name="Barry C.E. III"/>
            <person name="Tekaia F."/>
            <person name="Badcock K."/>
            <person name="Basham D."/>
            <person name="Brown D."/>
            <person name="Chillingworth T."/>
            <person name="Connor R."/>
            <person name="Davies R.M."/>
            <person name="Devlin K."/>
            <person name="Feltwell T."/>
            <person name="Gentles S."/>
            <person name="Hamlin N."/>
            <person name="Holroyd S."/>
            <person name="Hornsby T."/>
            <person name="Jagels K."/>
            <person name="Krogh A."/>
            <person name="McLean J."/>
            <person name="Moule S."/>
            <person name="Murphy L.D."/>
            <person name="Oliver S."/>
            <person name="Osborne J."/>
            <person name="Quail M.A."/>
            <person name="Rajandream M.A."/>
            <person name="Rogers J."/>
            <person name="Rutter S."/>
            <person name="Seeger K."/>
            <person name="Skelton S."/>
            <person name="Squares S."/>
            <person name="Squares R."/>
            <person name="Sulston J.E."/>
            <person name="Taylor K."/>
            <person name="Whitehead S."/>
            <person name="Barrell B.G."/>
        </authorList>
    </citation>
    <scope>NUCLEOTIDE SEQUENCE [LARGE SCALE GENOMIC DNA]</scope>
    <source>
        <strain>ATCC 25618 / H37Rv</strain>
    </source>
</reference>
<reference key="4">
    <citation type="journal article" date="2002" name="Microbiology">
        <title>Re-annotation of the genome sequence of Mycobacterium tuberculosis H37Rv.</title>
        <authorList>
            <person name="Camus J.-C."/>
            <person name="Pryor M.J."/>
            <person name="Medigue C."/>
            <person name="Cole S.T."/>
        </authorList>
    </citation>
    <scope>SEQUENCE REVISION</scope>
</reference>
<reference key="5">
    <citation type="journal article" date="2010" name="Tuberculosis">
        <title>Effect of PstS sub-units or PknD deficiency on the survival of Mycobacterium tuberculosis.</title>
        <authorList>
            <person name="Vanzembergh F."/>
            <person name="Peirs P."/>
            <person name="Lefevre P."/>
            <person name="Celio N."/>
            <person name="Mathys V."/>
            <person name="Content J."/>
            <person name="Kalai M."/>
        </authorList>
    </citation>
    <scope>FUNCTION</scope>
    <scope>INDUCTION BY PHOSPHATE STARVATION</scope>
    <source>
        <strain>H37Rv</strain>
    </source>
</reference>